<comment type="function">
    <text evidence="2">Movement protein that is involved in local cell-cell movement via plamodesmata. At least five viral proteins, CP, CPm, p6, p64 and Hsp70h are essential for cell-cell movement. Also plays a role in virion formation. Together with Hsp70h and CPm, encapsidates the 5'-terminal portion of the viral genome.</text>
</comment>
<comment type="subcellular location">
    <subcellularLocation>
        <location evidence="1">Virion</location>
    </subcellularLocation>
    <text>Integral virion tail component. The N-terminus is exposed at the virion surface, whereas the C-terminus is embedded in the virion.</text>
</comment>
<name>P64_BYVU</name>
<proteinExistence type="predicted"/>
<organism>
    <name type="scientific">Beet yellows virus (isolate Ukraine)</name>
    <name type="common">BYV</name>
    <name type="synonym">Sugar beet yellows virus</name>
    <dbReference type="NCBI Taxonomy" id="478555"/>
    <lineage>
        <taxon>Viruses</taxon>
        <taxon>Riboviria</taxon>
        <taxon>Orthornavirae</taxon>
        <taxon>Kitrinoviricota</taxon>
        <taxon>Alsuviricetes</taxon>
        <taxon>Martellivirales</taxon>
        <taxon>Closteroviridae</taxon>
        <taxon>Closterovirus</taxon>
        <taxon>Beet yellows virus</taxon>
    </lineage>
</organism>
<dbReference type="EMBL" id="X53462">
    <property type="protein sequence ID" value="CAA37552.1"/>
    <property type="molecule type" value="Genomic_RNA"/>
</dbReference>
<dbReference type="EMBL" id="X73476">
    <property type="protein sequence ID" value="CAA51866.1"/>
    <property type="molecule type" value="Genomic_RNA"/>
</dbReference>
<dbReference type="RefSeq" id="NP_041873.1">
    <property type="nucleotide sequence ID" value="NC_001598.1"/>
</dbReference>
<dbReference type="KEGG" id="vg:1724786"/>
<dbReference type="Proteomes" id="UP000000359">
    <property type="component" value="Segment"/>
</dbReference>
<dbReference type="GO" id="GO:0044423">
    <property type="term" value="C:virion component"/>
    <property type="evidence" value="ECO:0007669"/>
    <property type="project" value="UniProtKB-KW"/>
</dbReference>
<dbReference type="GO" id="GO:0046740">
    <property type="term" value="P:transport of virus in host, cell to cell"/>
    <property type="evidence" value="ECO:0007669"/>
    <property type="project" value="UniProtKB-KW"/>
</dbReference>
<dbReference type="InterPro" id="IPR004909">
    <property type="entry name" value="Vir_Hsp90"/>
</dbReference>
<dbReference type="Pfam" id="PF03225">
    <property type="entry name" value="Viral_Hsp90"/>
    <property type="match status" value="1"/>
</dbReference>
<accession>Q08541</accession>
<accession>Q66110</accession>
<reference key="1">
    <citation type="journal article" date="1991" name="J. Gen. Virol.">
        <title>Nucleotide sequence of the 3'-terminal half of beet yellows closterovirus RNA genome: unique arrangement of eight virus genes.</title>
        <authorList>
            <person name="Agranovsky A.A."/>
            <person name="Boyko V.P."/>
            <person name="Karasev A.V."/>
            <person name="Lunina N.A."/>
            <person name="Koonin E.V."/>
            <person name="Dolja V.V."/>
        </authorList>
    </citation>
    <scope>NUCLEOTIDE SEQUENCE [GENOMIC RNA]</scope>
</reference>
<reference key="2">
    <citation type="journal article" date="1994" name="Virology">
        <title>Beet yellows closterovirus: complete genome structure and identification of a leader papain-like thiol protease.</title>
        <authorList>
            <person name="Agranovsky A.A."/>
            <person name="Koonin E.V."/>
            <person name="Boyko V.P."/>
            <person name="Maiss E."/>
            <person name="Froetschl R."/>
            <person name="Lunina N.A."/>
            <person name="Atabekov J.G."/>
        </authorList>
    </citation>
    <scope>NUCLEOTIDE SEQUENCE [GENOMIC RNA]</scope>
</reference>
<reference key="3">
    <citation type="journal article" date="2003" name="J. Virol.">
        <title>The 64-kilodalton capsid protein homolog of Beet yellows virus is required for assembly of virion tails.</title>
        <authorList>
            <person name="Napuli A.J."/>
            <person name="Alzhanova D.V."/>
            <person name="Doneanu C.E."/>
            <person name="Barofsky D.F."/>
            <person name="Koonin E.V."/>
            <person name="Dolja V.V."/>
        </authorList>
    </citation>
    <scope>SUBCELLULAR LOCATION</scope>
</reference>
<reference key="4">
    <citation type="journal article" date="2007" name="Virology">
        <title>Virion tails of Beet yellows virus: coordinated assembly by three structural proteins.</title>
        <authorList>
            <person name="Alzhanova D.V."/>
            <person name="Prokhnevsky A.I."/>
            <person name="Peremyslov V.V."/>
            <person name="Dolja V.V."/>
        </authorList>
    </citation>
    <scope>FUNCTION</scope>
</reference>
<organismHost>
    <name type="scientific">Beta vulgaris</name>
    <name type="common">Sugar beet</name>
    <dbReference type="NCBI Taxonomy" id="161934"/>
</organismHost>
<feature type="chain" id="PRO_0000312566" description="64 kDa protein">
    <location>
        <begin position="1"/>
        <end position="553"/>
    </location>
</feature>
<feature type="sequence conflict" description="In Ref. 1; CAA37552." evidence="3" ref="1">
    <original>G</original>
    <variation>R</variation>
    <location>
        <position position="499"/>
    </location>
</feature>
<keyword id="KW-1185">Reference proteome</keyword>
<keyword id="KW-0813">Transport</keyword>
<keyword id="KW-0916">Viral movement protein</keyword>
<keyword id="KW-0946">Virion</keyword>
<gene>
    <name type="ORF">ORF4</name>
</gene>
<protein>
    <recommendedName>
        <fullName>64 kDa protein</fullName>
    </recommendedName>
    <alternativeName>
        <fullName>p64</fullName>
    </alternativeName>
</protein>
<sequence length="553" mass="63905">MTTRFSTPANYYWGELFRRFFGGQEWKNLMSEAASVSRPRYSSDFRFSDGVILSRKTFGESTGESFVREFSLLLTFPKTYEVCKLCGVAMELALNGMNRLSDYNVSEFNIVDVKTVGCKFNIQSVTEFVKKINGNVAEPSLVEHCWSLSNSCGELINPKDTKRFVSLIFKGKDLAESTDEAIVSSSYLDYLSHCLNLYETCNLSSNSGKKSLYDEFLKHVIDYLENSDLEYRSPSDNPLVAGILYDMCFEYNTLKSTYLKNIESFDCFLSLYLPLLSEVFSMNWERPAPDVRLLFELDAAELLLKVPTINMHDSTFLYKNKLRYLESYFEDDSNELIKVKVDSLLTRDNPELKLAQRWVGFHCYYGVFRTAQTRKVKRDAEYKLPPALGEFVINMSGVEEFFEELQKKMPSISVRRRFCGSLSHEAFSVFKRFGVGFPPITRLNVPVKYSYLNVDYYRHVKRVGLTQDELTILSNIEFDVAEMCCEREVALQARRAQRGEKPFQGWKGTKNEISPHARSSIRVKKNNDSLLNILWKDVGARSQRRLNPLHRKH</sequence>
<evidence type="ECO:0000269" key="1">
    <source>
    </source>
</evidence>
<evidence type="ECO:0000269" key="2">
    <source>
    </source>
</evidence>
<evidence type="ECO:0000305" key="3"/>